<proteinExistence type="inferred from homology"/>
<comment type="function">
    <text evidence="1">Catalyzes the reversible formation of acyl-phosphate (acyl-PO(4)) from acyl-[acyl-carrier-protein] (acyl-ACP). This enzyme utilizes acyl-ACP as fatty acyl donor, but not acyl-CoA.</text>
</comment>
<comment type="catalytic activity">
    <reaction evidence="1">
        <text>a fatty acyl-[ACP] + phosphate = an acyl phosphate + holo-[ACP]</text>
        <dbReference type="Rhea" id="RHEA:42292"/>
        <dbReference type="Rhea" id="RHEA-COMP:9685"/>
        <dbReference type="Rhea" id="RHEA-COMP:14125"/>
        <dbReference type="ChEBI" id="CHEBI:43474"/>
        <dbReference type="ChEBI" id="CHEBI:59918"/>
        <dbReference type="ChEBI" id="CHEBI:64479"/>
        <dbReference type="ChEBI" id="CHEBI:138651"/>
        <dbReference type="EC" id="2.3.1.274"/>
    </reaction>
</comment>
<comment type="pathway">
    <text evidence="1">Lipid metabolism; phospholipid metabolism.</text>
</comment>
<comment type="subunit">
    <text evidence="1">Homodimer. Probably interacts with PlsY.</text>
</comment>
<comment type="subcellular location">
    <subcellularLocation>
        <location evidence="1">Cytoplasm</location>
    </subcellularLocation>
    <text evidence="1">Associated with the membrane possibly through PlsY.</text>
</comment>
<comment type="similarity">
    <text evidence="1">Belongs to the PlsX family.</text>
</comment>
<feature type="chain" id="PRO_0000189960" description="Phosphate acyltransferase">
    <location>
        <begin position="1"/>
        <end position="331"/>
    </location>
</feature>
<reference key="1">
    <citation type="journal article" date="2000" name="Nature">
        <title>The complete sequence of the mucosal pathogen Ureaplasma urealyticum.</title>
        <authorList>
            <person name="Glass J.I."/>
            <person name="Lefkowitz E.J."/>
            <person name="Glass J.S."/>
            <person name="Heiner C.R."/>
            <person name="Chen E.Y."/>
            <person name="Cassell G.H."/>
        </authorList>
    </citation>
    <scope>NUCLEOTIDE SEQUENCE [LARGE SCALE GENOMIC DNA]</scope>
    <source>
        <strain>ATCC 700970</strain>
    </source>
</reference>
<sequence>MEKIKILLDTMGYENDLEHVIKAAKDFYYQHEDDLEIILVGNEQLIKPLLDNDWRLFPIVHTEVSIEQNDTILSARKKQNSSMHLALRYLKDKQADGMLTAGNSAVFVYNAYATIGLLEHIKKPAFMPFVPTIDGGVTNLLDVGASIDVDGTDLFNFAIMANTIAKMRTPNPRVGVLNIGTEDHKGLPYHQEANELLKTSNLNYVGFVEPKTILEREVDVLVADGFSGNIALKTMEGVGKTISNFLKNEYKKPKNLFAALLSKPIFKKIKKAFDYKEHAGAFVLGLDGILVKTHGSADYQQFMSALKILYETIKADVLNEIKKDLNNYYGQ</sequence>
<protein>
    <recommendedName>
        <fullName evidence="1">Phosphate acyltransferase</fullName>
        <ecNumber evidence="1">2.3.1.274</ecNumber>
    </recommendedName>
    <alternativeName>
        <fullName evidence="1">Acyl-ACP phosphotransacylase</fullName>
    </alternativeName>
    <alternativeName>
        <fullName evidence="1">Acyl-[acyl-carrier-protein]--phosphate acyltransferase</fullName>
    </alternativeName>
    <alternativeName>
        <fullName evidence="1">Phosphate-acyl-ACP acyltransferase</fullName>
    </alternativeName>
</protein>
<dbReference type="EC" id="2.3.1.274" evidence="1"/>
<dbReference type="EMBL" id="AF222894">
    <property type="protein sequence ID" value="AAF30613.1"/>
    <property type="molecule type" value="Genomic_DNA"/>
</dbReference>
<dbReference type="RefSeq" id="WP_006688948.1">
    <property type="nucleotide sequence ID" value="NC_002162.1"/>
</dbReference>
<dbReference type="SMR" id="Q9PQT7"/>
<dbReference type="STRING" id="273119.UU206"/>
<dbReference type="EnsemblBacteria" id="AAF30613">
    <property type="protein sequence ID" value="AAF30613"/>
    <property type="gene ID" value="UU206"/>
</dbReference>
<dbReference type="GeneID" id="29672706"/>
<dbReference type="KEGG" id="uur:UU206"/>
<dbReference type="eggNOG" id="COG0416">
    <property type="taxonomic scope" value="Bacteria"/>
</dbReference>
<dbReference type="HOGENOM" id="CLU_039379_1_1_14"/>
<dbReference type="OrthoDB" id="9806408at2"/>
<dbReference type="UniPathway" id="UPA00085"/>
<dbReference type="Proteomes" id="UP000000423">
    <property type="component" value="Chromosome"/>
</dbReference>
<dbReference type="GO" id="GO:0005737">
    <property type="term" value="C:cytoplasm"/>
    <property type="evidence" value="ECO:0007669"/>
    <property type="project" value="UniProtKB-SubCell"/>
</dbReference>
<dbReference type="GO" id="GO:0043811">
    <property type="term" value="F:phosphate:acyl-[acyl carrier protein] acyltransferase activity"/>
    <property type="evidence" value="ECO:0007669"/>
    <property type="project" value="UniProtKB-UniRule"/>
</dbReference>
<dbReference type="GO" id="GO:0006633">
    <property type="term" value="P:fatty acid biosynthetic process"/>
    <property type="evidence" value="ECO:0007669"/>
    <property type="project" value="UniProtKB-UniRule"/>
</dbReference>
<dbReference type="GO" id="GO:0008654">
    <property type="term" value="P:phospholipid biosynthetic process"/>
    <property type="evidence" value="ECO:0007669"/>
    <property type="project" value="UniProtKB-KW"/>
</dbReference>
<dbReference type="Gene3D" id="3.40.718.10">
    <property type="entry name" value="Isopropylmalate Dehydrogenase"/>
    <property type="match status" value="1"/>
</dbReference>
<dbReference type="HAMAP" id="MF_00019">
    <property type="entry name" value="PlsX"/>
    <property type="match status" value="1"/>
</dbReference>
<dbReference type="InterPro" id="IPR003664">
    <property type="entry name" value="FA_synthesis"/>
</dbReference>
<dbReference type="InterPro" id="IPR012281">
    <property type="entry name" value="Phospholipid_synth_PlsX-like"/>
</dbReference>
<dbReference type="NCBIfam" id="TIGR00182">
    <property type="entry name" value="plsX"/>
    <property type="match status" value="1"/>
</dbReference>
<dbReference type="PANTHER" id="PTHR30100">
    <property type="entry name" value="FATTY ACID/PHOSPHOLIPID SYNTHESIS PROTEIN PLSX"/>
    <property type="match status" value="1"/>
</dbReference>
<dbReference type="PANTHER" id="PTHR30100:SF1">
    <property type="entry name" value="PHOSPHATE ACYLTRANSFERASE"/>
    <property type="match status" value="1"/>
</dbReference>
<dbReference type="Pfam" id="PF02504">
    <property type="entry name" value="FA_synthesis"/>
    <property type="match status" value="1"/>
</dbReference>
<dbReference type="PIRSF" id="PIRSF002465">
    <property type="entry name" value="Phsphlp_syn_PlsX"/>
    <property type="match status" value="1"/>
</dbReference>
<dbReference type="SUPFAM" id="SSF53659">
    <property type="entry name" value="Isocitrate/Isopropylmalate dehydrogenase-like"/>
    <property type="match status" value="1"/>
</dbReference>
<organism>
    <name type="scientific">Ureaplasma parvum serovar 3 (strain ATCC 700970)</name>
    <dbReference type="NCBI Taxonomy" id="273119"/>
    <lineage>
        <taxon>Bacteria</taxon>
        <taxon>Bacillati</taxon>
        <taxon>Mycoplasmatota</taxon>
        <taxon>Mycoplasmoidales</taxon>
        <taxon>Mycoplasmoidaceae</taxon>
        <taxon>Ureaplasma</taxon>
    </lineage>
</organism>
<gene>
    <name evidence="1" type="primary">plsX</name>
    <name type="ordered locus">UU206</name>
</gene>
<name>PLSX_UREPA</name>
<evidence type="ECO:0000255" key="1">
    <source>
        <dbReference type="HAMAP-Rule" id="MF_00019"/>
    </source>
</evidence>
<accession>Q9PQT7</accession>
<keyword id="KW-0963">Cytoplasm</keyword>
<keyword id="KW-0444">Lipid biosynthesis</keyword>
<keyword id="KW-0443">Lipid metabolism</keyword>
<keyword id="KW-0594">Phospholipid biosynthesis</keyword>
<keyword id="KW-1208">Phospholipid metabolism</keyword>
<keyword id="KW-1185">Reference proteome</keyword>
<keyword id="KW-0808">Transferase</keyword>